<gene>
    <name evidence="1" type="primary">hemA</name>
    <name type="ordered locus">Noc_0510</name>
</gene>
<protein>
    <recommendedName>
        <fullName evidence="1">Glutamyl-tRNA reductase</fullName>
        <shortName evidence="1">GluTR</shortName>
        <ecNumber evidence="1">1.2.1.70</ecNumber>
    </recommendedName>
</protein>
<organism>
    <name type="scientific">Nitrosococcus oceani (strain ATCC 19707 / BCRC 17464 / JCM 30415 / NCIMB 11848 / C-107)</name>
    <dbReference type="NCBI Taxonomy" id="323261"/>
    <lineage>
        <taxon>Bacteria</taxon>
        <taxon>Pseudomonadati</taxon>
        <taxon>Pseudomonadota</taxon>
        <taxon>Gammaproteobacteria</taxon>
        <taxon>Chromatiales</taxon>
        <taxon>Chromatiaceae</taxon>
        <taxon>Nitrosococcus</taxon>
    </lineage>
</organism>
<sequence>MQLLAFGVNHKTASVAIREQITFAPERLPSALTELVNRSGAKEAAILSTCNRTELYCGCAPGQQEAVIEWLRQYHGMEPKILETCLYTHPDHSAVRHLLRVASGLDSMVLGEPQILGQIKAAYSYGLEAGTIGRVLGRLFQHTFYVAKQVRTDTAIGTSPISVAFAAVSLAKQIFGDLESTTAFLIGAGETIELAARHLFTNGVGHIIVANRNLDKAYQLANQFNGYAIPLAEMPKHLSEADIVISSTGSQLPILGKGTVERALRIRKHRPIFMVDIAVPRDIEPEVGELQDIYLYNVDDLQEVVQENLRSRQAAALQAEEIIDTQVEYFMDWVRTQDAVPVICAVRQEADQLRKEALEKARRRLAQGHDPNEVLTMLAHNLTNKLMHVPTRQLRSLGATGDELALQAALKIFDVDHFKA</sequence>
<proteinExistence type="inferred from homology"/>
<accession>Q3JDR3</accession>
<keyword id="KW-0521">NADP</keyword>
<keyword id="KW-0560">Oxidoreductase</keyword>
<keyword id="KW-0627">Porphyrin biosynthesis</keyword>
<keyword id="KW-1185">Reference proteome</keyword>
<name>HEM1_NITOC</name>
<comment type="function">
    <text evidence="1">Catalyzes the NADPH-dependent reduction of glutamyl-tRNA(Glu) to glutamate 1-semialdehyde (GSA).</text>
</comment>
<comment type="catalytic activity">
    <reaction evidence="1">
        <text>(S)-4-amino-5-oxopentanoate + tRNA(Glu) + NADP(+) = L-glutamyl-tRNA(Glu) + NADPH + H(+)</text>
        <dbReference type="Rhea" id="RHEA:12344"/>
        <dbReference type="Rhea" id="RHEA-COMP:9663"/>
        <dbReference type="Rhea" id="RHEA-COMP:9680"/>
        <dbReference type="ChEBI" id="CHEBI:15378"/>
        <dbReference type="ChEBI" id="CHEBI:57501"/>
        <dbReference type="ChEBI" id="CHEBI:57783"/>
        <dbReference type="ChEBI" id="CHEBI:58349"/>
        <dbReference type="ChEBI" id="CHEBI:78442"/>
        <dbReference type="ChEBI" id="CHEBI:78520"/>
        <dbReference type="EC" id="1.2.1.70"/>
    </reaction>
</comment>
<comment type="pathway">
    <text evidence="1">Porphyrin-containing compound metabolism; protoporphyrin-IX biosynthesis; 5-aminolevulinate from L-glutamyl-tRNA(Glu): step 1/2.</text>
</comment>
<comment type="subunit">
    <text evidence="1">Homodimer.</text>
</comment>
<comment type="domain">
    <text evidence="1">Possesses an unusual extended V-shaped dimeric structure with each monomer consisting of three distinct domains arranged along a curved 'spinal' alpha-helix. The N-terminal catalytic domain specifically recognizes the glutamate moiety of the substrate. The second domain is the NADPH-binding domain, and the third C-terminal domain is responsible for dimerization.</text>
</comment>
<comment type="miscellaneous">
    <text evidence="1">During catalysis, the active site Cys acts as a nucleophile attacking the alpha-carbonyl group of tRNA-bound glutamate with the formation of a thioester intermediate between enzyme and glutamate, and the concomitant release of tRNA(Glu). The thioester intermediate is finally reduced by direct hydride transfer from NADPH, to form the product GSA.</text>
</comment>
<comment type="similarity">
    <text evidence="1">Belongs to the glutamyl-tRNA reductase family.</text>
</comment>
<evidence type="ECO:0000255" key="1">
    <source>
        <dbReference type="HAMAP-Rule" id="MF_00087"/>
    </source>
</evidence>
<reference key="1">
    <citation type="journal article" date="2006" name="Appl. Environ. Microbiol.">
        <title>Complete genome sequence of the marine, chemolithoautotrophic, ammonia-oxidizing bacterium Nitrosococcus oceani ATCC 19707.</title>
        <authorList>
            <person name="Klotz M.G."/>
            <person name="Arp D.J."/>
            <person name="Chain P.S.G."/>
            <person name="El-Sheikh A.F."/>
            <person name="Hauser L.J."/>
            <person name="Hommes N.G."/>
            <person name="Larimer F.W."/>
            <person name="Malfatti S.A."/>
            <person name="Norton J.M."/>
            <person name="Poret-Peterson A.T."/>
            <person name="Vergez L.M."/>
            <person name="Ward B.B."/>
        </authorList>
    </citation>
    <scope>NUCLEOTIDE SEQUENCE [LARGE SCALE GENOMIC DNA]</scope>
    <source>
        <strain>ATCC 19707 / BCRC 17464 / JCM 30415 / NCIMB 11848 / C-107</strain>
    </source>
</reference>
<dbReference type="EC" id="1.2.1.70" evidence="1"/>
<dbReference type="EMBL" id="CP000127">
    <property type="protein sequence ID" value="ABA57033.1"/>
    <property type="molecule type" value="Genomic_DNA"/>
</dbReference>
<dbReference type="RefSeq" id="WP_002813733.1">
    <property type="nucleotide sequence ID" value="NC_007484.1"/>
</dbReference>
<dbReference type="SMR" id="Q3JDR3"/>
<dbReference type="FunCoup" id="Q3JDR3">
    <property type="interactions" value="361"/>
</dbReference>
<dbReference type="STRING" id="323261.Noc_0510"/>
<dbReference type="KEGG" id="noc:Noc_0510"/>
<dbReference type="eggNOG" id="COG0373">
    <property type="taxonomic scope" value="Bacteria"/>
</dbReference>
<dbReference type="HOGENOM" id="CLU_035113_2_2_6"/>
<dbReference type="InParanoid" id="Q3JDR3"/>
<dbReference type="UniPathway" id="UPA00251">
    <property type="reaction ID" value="UER00316"/>
</dbReference>
<dbReference type="Proteomes" id="UP000006838">
    <property type="component" value="Chromosome"/>
</dbReference>
<dbReference type="GO" id="GO:0008883">
    <property type="term" value="F:glutamyl-tRNA reductase activity"/>
    <property type="evidence" value="ECO:0007669"/>
    <property type="project" value="UniProtKB-UniRule"/>
</dbReference>
<dbReference type="GO" id="GO:0050661">
    <property type="term" value="F:NADP binding"/>
    <property type="evidence" value="ECO:0007669"/>
    <property type="project" value="InterPro"/>
</dbReference>
<dbReference type="GO" id="GO:0019353">
    <property type="term" value="P:protoporphyrinogen IX biosynthetic process from glutamate"/>
    <property type="evidence" value="ECO:0007669"/>
    <property type="project" value="TreeGrafter"/>
</dbReference>
<dbReference type="CDD" id="cd05213">
    <property type="entry name" value="NAD_bind_Glutamyl_tRNA_reduct"/>
    <property type="match status" value="1"/>
</dbReference>
<dbReference type="FunFam" id="3.30.460.30:FF:000001">
    <property type="entry name" value="Glutamyl-tRNA reductase"/>
    <property type="match status" value="1"/>
</dbReference>
<dbReference type="FunFam" id="3.40.50.720:FF:000031">
    <property type="entry name" value="Glutamyl-tRNA reductase"/>
    <property type="match status" value="1"/>
</dbReference>
<dbReference type="Gene3D" id="3.30.460.30">
    <property type="entry name" value="Glutamyl-tRNA reductase, N-terminal domain"/>
    <property type="match status" value="1"/>
</dbReference>
<dbReference type="Gene3D" id="3.40.50.720">
    <property type="entry name" value="NAD(P)-binding Rossmann-like Domain"/>
    <property type="match status" value="1"/>
</dbReference>
<dbReference type="HAMAP" id="MF_00087">
    <property type="entry name" value="Glu_tRNA_reductase"/>
    <property type="match status" value="1"/>
</dbReference>
<dbReference type="InterPro" id="IPR000343">
    <property type="entry name" value="4pyrrol_synth_GluRdtase"/>
</dbReference>
<dbReference type="InterPro" id="IPR015896">
    <property type="entry name" value="4pyrrol_synth_GluRdtase_dimer"/>
</dbReference>
<dbReference type="InterPro" id="IPR015895">
    <property type="entry name" value="4pyrrol_synth_GluRdtase_N"/>
</dbReference>
<dbReference type="InterPro" id="IPR018214">
    <property type="entry name" value="GluRdtase_CS"/>
</dbReference>
<dbReference type="InterPro" id="IPR036453">
    <property type="entry name" value="GluRdtase_dimer_dom_sf"/>
</dbReference>
<dbReference type="InterPro" id="IPR036343">
    <property type="entry name" value="GluRdtase_N_sf"/>
</dbReference>
<dbReference type="InterPro" id="IPR036291">
    <property type="entry name" value="NAD(P)-bd_dom_sf"/>
</dbReference>
<dbReference type="InterPro" id="IPR006151">
    <property type="entry name" value="Shikm_DH/Glu-tRNA_Rdtase"/>
</dbReference>
<dbReference type="NCBIfam" id="TIGR01035">
    <property type="entry name" value="hemA"/>
    <property type="match status" value="1"/>
</dbReference>
<dbReference type="PANTHER" id="PTHR43013">
    <property type="entry name" value="GLUTAMYL-TRNA REDUCTASE"/>
    <property type="match status" value="1"/>
</dbReference>
<dbReference type="PANTHER" id="PTHR43013:SF1">
    <property type="entry name" value="GLUTAMYL-TRNA REDUCTASE"/>
    <property type="match status" value="1"/>
</dbReference>
<dbReference type="Pfam" id="PF00745">
    <property type="entry name" value="GlutR_dimer"/>
    <property type="match status" value="1"/>
</dbReference>
<dbReference type="Pfam" id="PF05201">
    <property type="entry name" value="GlutR_N"/>
    <property type="match status" value="1"/>
</dbReference>
<dbReference type="Pfam" id="PF01488">
    <property type="entry name" value="Shikimate_DH"/>
    <property type="match status" value="1"/>
</dbReference>
<dbReference type="PIRSF" id="PIRSF000445">
    <property type="entry name" value="4pyrrol_synth_GluRdtase"/>
    <property type="match status" value="1"/>
</dbReference>
<dbReference type="SUPFAM" id="SSF69742">
    <property type="entry name" value="Glutamyl tRNA-reductase catalytic, N-terminal domain"/>
    <property type="match status" value="1"/>
</dbReference>
<dbReference type="SUPFAM" id="SSF69075">
    <property type="entry name" value="Glutamyl tRNA-reductase dimerization domain"/>
    <property type="match status" value="1"/>
</dbReference>
<dbReference type="SUPFAM" id="SSF51735">
    <property type="entry name" value="NAD(P)-binding Rossmann-fold domains"/>
    <property type="match status" value="1"/>
</dbReference>
<dbReference type="PROSITE" id="PS00747">
    <property type="entry name" value="GLUTR"/>
    <property type="match status" value="1"/>
</dbReference>
<feature type="chain" id="PRO_1000004657" description="Glutamyl-tRNA reductase">
    <location>
        <begin position="1"/>
        <end position="420"/>
    </location>
</feature>
<feature type="active site" description="Nucleophile" evidence="1">
    <location>
        <position position="50"/>
    </location>
</feature>
<feature type="binding site" evidence="1">
    <location>
        <begin position="49"/>
        <end position="52"/>
    </location>
    <ligand>
        <name>substrate</name>
    </ligand>
</feature>
<feature type="binding site" evidence="1">
    <location>
        <position position="107"/>
    </location>
    <ligand>
        <name>substrate</name>
    </ligand>
</feature>
<feature type="binding site" evidence="1">
    <location>
        <begin position="112"/>
        <end position="114"/>
    </location>
    <ligand>
        <name>substrate</name>
    </ligand>
</feature>
<feature type="binding site" evidence="1">
    <location>
        <position position="118"/>
    </location>
    <ligand>
        <name>substrate</name>
    </ligand>
</feature>
<feature type="binding site" evidence="1">
    <location>
        <begin position="187"/>
        <end position="192"/>
    </location>
    <ligand>
        <name>NADP(+)</name>
        <dbReference type="ChEBI" id="CHEBI:58349"/>
    </ligand>
</feature>
<feature type="site" description="Important for activity" evidence="1">
    <location>
        <position position="97"/>
    </location>
</feature>